<accession>Q2SU89</accession>
<keyword id="KW-0963">Cytoplasm</keyword>
<keyword id="KW-0704">Schiff base</keyword>
<keyword id="KW-0784">Thiamine biosynthesis</keyword>
<keyword id="KW-0808">Transferase</keyword>
<proteinExistence type="inferred from homology"/>
<dbReference type="EC" id="2.8.1.10" evidence="1"/>
<dbReference type="EMBL" id="CP000086">
    <property type="protein sequence ID" value="ABC37415.1"/>
    <property type="molecule type" value="Genomic_DNA"/>
</dbReference>
<dbReference type="RefSeq" id="WP_009888503.1">
    <property type="nucleotide sequence ID" value="NZ_CP008786.1"/>
</dbReference>
<dbReference type="SMR" id="Q2SU89"/>
<dbReference type="GeneID" id="45122693"/>
<dbReference type="KEGG" id="bte:BTH_I3006"/>
<dbReference type="HOGENOM" id="CLU_062233_1_0_4"/>
<dbReference type="UniPathway" id="UPA00060"/>
<dbReference type="Proteomes" id="UP000001930">
    <property type="component" value="Chromosome I"/>
</dbReference>
<dbReference type="GO" id="GO:0005737">
    <property type="term" value="C:cytoplasm"/>
    <property type="evidence" value="ECO:0007669"/>
    <property type="project" value="UniProtKB-SubCell"/>
</dbReference>
<dbReference type="GO" id="GO:1990107">
    <property type="term" value="F:thiazole synthase activity"/>
    <property type="evidence" value="ECO:0007669"/>
    <property type="project" value="UniProtKB-EC"/>
</dbReference>
<dbReference type="GO" id="GO:0009229">
    <property type="term" value="P:thiamine diphosphate biosynthetic process"/>
    <property type="evidence" value="ECO:0007669"/>
    <property type="project" value="UniProtKB-UniRule"/>
</dbReference>
<dbReference type="CDD" id="cd04728">
    <property type="entry name" value="ThiG"/>
    <property type="match status" value="1"/>
</dbReference>
<dbReference type="Gene3D" id="3.20.20.70">
    <property type="entry name" value="Aldolase class I"/>
    <property type="match status" value="1"/>
</dbReference>
<dbReference type="HAMAP" id="MF_00443">
    <property type="entry name" value="ThiG"/>
    <property type="match status" value="1"/>
</dbReference>
<dbReference type="InterPro" id="IPR013785">
    <property type="entry name" value="Aldolase_TIM"/>
</dbReference>
<dbReference type="InterPro" id="IPR033983">
    <property type="entry name" value="Thiazole_synthase_ThiG"/>
</dbReference>
<dbReference type="InterPro" id="IPR008867">
    <property type="entry name" value="ThiG"/>
</dbReference>
<dbReference type="PANTHER" id="PTHR34266">
    <property type="entry name" value="THIAZOLE SYNTHASE"/>
    <property type="match status" value="1"/>
</dbReference>
<dbReference type="PANTHER" id="PTHR34266:SF2">
    <property type="entry name" value="THIAZOLE SYNTHASE"/>
    <property type="match status" value="1"/>
</dbReference>
<dbReference type="Pfam" id="PF05690">
    <property type="entry name" value="ThiG"/>
    <property type="match status" value="1"/>
</dbReference>
<dbReference type="SUPFAM" id="SSF110399">
    <property type="entry name" value="ThiG-like"/>
    <property type="match status" value="1"/>
</dbReference>
<protein>
    <recommendedName>
        <fullName evidence="1">Thiazole synthase</fullName>
        <ecNumber evidence="1">2.8.1.10</ecNumber>
    </recommendedName>
</protein>
<gene>
    <name evidence="1" type="primary">thiG</name>
    <name type="ordered locus">BTH_I3006</name>
</gene>
<sequence length="271" mass="28858">MTLLSSADTLTLHGQTFASRVLLGTSRYPSLQSLSDSIAAARPGMVTVALRRQMNAGAAEAGFFDLLKRHDVPLLPNTAGCQTIAEAVTTAQMAREVFETDWIKLELIGDDYTLQPDPVGLIEAAALLVKDGFKVLPYCTEDLVIARRLLDAGCEALMPWGAPIGTGKGVVNPYGLRVLRERLPDVPLIVDAGLGVPSHACQVMEWGFDGVLLNTAVSQATHPEIMARAFAQGVDAGRAAYLAGPMDARESAHASTPVVGMPFWHQDGSHA</sequence>
<reference key="1">
    <citation type="journal article" date="2005" name="BMC Genomics">
        <title>Bacterial genome adaptation to niches: divergence of the potential virulence genes in three Burkholderia species of different survival strategies.</title>
        <authorList>
            <person name="Kim H.S."/>
            <person name="Schell M.A."/>
            <person name="Yu Y."/>
            <person name="Ulrich R.L."/>
            <person name="Sarria S.H."/>
            <person name="Nierman W.C."/>
            <person name="DeShazer D."/>
        </authorList>
    </citation>
    <scope>NUCLEOTIDE SEQUENCE [LARGE SCALE GENOMIC DNA]</scope>
    <source>
        <strain>ATCC 700388 / DSM 13276 / CCUG 48851 / CIP 106301 / E264</strain>
    </source>
</reference>
<evidence type="ECO:0000255" key="1">
    <source>
        <dbReference type="HAMAP-Rule" id="MF_00443"/>
    </source>
</evidence>
<comment type="function">
    <text evidence="1">Catalyzes the rearrangement of 1-deoxy-D-xylulose 5-phosphate (DXP) to produce the thiazole phosphate moiety of thiamine. Sulfur is provided by the thiocarboxylate moiety of the carrier protein ThiS. In vitro, sulfur can be provided by H(2)S.</text>
</comment>
<comment type="catalytic activity">
    <reaction evidence="1">
        <text>[ThiS sulfur-carrier protein]-C-terminal-Gly-aminoethanethioate + 2-iminoacetate + 1-deoxy-D-xylulose 5-phosphate = [ThiS sulfur-carrier protein]-C-terminal Gly-Gly + 2-[(2R,5Z)-2-carboxy-4-methylthiazol-5(2H)-ylidene]ethyl phosphate + 2 H2O + H(+)</text>
        <dbReference type="Rhea" id="RHEA:26297"/>
        <dbReference type="Rhea" id="RHEA-COMP:12909"/>
        <dbReference type="Rhea" id="RHEA-COMP:19908"/>
        <dbReference type="ChEBI" id="CHEBI:15377"/>
        <dbReference type="ChEBI" id="CHEBI:15378"/>
        <dbReference type="ChEBI" id="CHEBI:57792"/>
        <dbReference type="ChEBI" id="CHEBI:62899"/>
        <dbReference type="ChEBI" id="CHEBI:77846"/>
        <dbReference type="ChEBI" id="CHEBI:90778"/>
        <dbReference type="ChEBI" id="CHEBI:232372"/>
        <dbReference type="EC" id="2.8.1.10"/>
    </reaction>
</comment>
<comment type="pathway">
    <text evidence="1">Cofactor biosynthesis; thiamine diphosphate biosynthesis.</text>
</comment>
<comment type="subunit">
    <text evidence="1">Homotetramer. Forms heterodimers with either ThiH or ThiS.</text>
</comment>
<comment type="subcellular location">
    <subcellularLocation>
        <location evidence="1">Cytoplasm</location>
    </subcellularLocation>
</comment>
<comment type="similarity">
    <text evidence="1">Belongs to the ThiG family.</text>
</comment>
<name>THIG_BURTA</name>
<organism>
    <name type="scientific">Burkholderia thailandensis (strain ATCC 700388 / DSM 13276 / CCUG 48851 / CIP 106301 / E264)</name>
    <dbReference type="NCBI Taxonomy" id="271848"/>
    <lineage>
        <taxon>Bacteria</taxon>
        <taxon>Pseudomonadati</taxon>
        <taxon>Pseudomonadota</taxon>
        <taxon>Betaproteobacteria</taxon>
        <taxon>Burkholderiales</taxon>
        <taxon>Burkholderiaceae</taxon>
        <taxon>Burkholderia</taxon>
        <taxon>pseudomallei group</taxon>
    </lineage>
</organism>
<feature type="chain" id="PRO_0000236336" description="Thiazole synthase">
    <location>
        <begin position="1"/>
        <end position="271"/>
    </location>
</feature>
<feature type="active site" description="Schiff-base intermediate with DXP" evidence="1">
    <location>
        <position position="104"/>
    </location>
</feature>
<feature type="binding site" evidence="1">
    <location>
        <position position="165"/>
    </location>
    <ligand>
        <name>1-deoxy-D-xylulose 5-phosphate</name>
        <dbReference type="ChEBI" id="CHEBI:57792"/>
    </ligand>
</feature>
<feature type="binding site" evidence="1">
    <location>
        <begin position="192"/>
        <end position="193"/>
    </location>
    <ligand>
        <name>1-deoxy-D-xylulose 5-phosphate</name>
        <dbReference type="ChEBI" id="CHEBI:57792"/>
    </ligand>
</feature>
<feature type="binding site" evidence="1">
    <location>
        <begin position="214"/>
        <end position="215"/>
    </location>
    <ligand>
        <name>1-deoxy-D-xylulose 5-phosphate</name>
        <dbReference type="ChEBI" id="CHEBI:57792"/>
    </ligand>
</feature>